<accession>B8I3A9</accession>
<sequence>MNRVYSVSDINNYIKQLVSNDIILSDVSIRGEISNFKHHYTGHMYFTIKDKNSLLKCVMFRSQAVSLRFSPENGMKVIVSGYISVFERDGQYQLYASSMQPDGVGALHIAFEQLKEKLQREGLFDPENKKKIPVLPGSIGVVTSSTGAVIRDIINVTYRRNSKMKLVLYPVAVQGQQAAGQIAEAIKCLNEQNKVDVIIVARGGGSLEELWAFNEEIVARSIYASNIPVISAVGHETDFTICDFVSDMRAPTPSAAAELAVPDMEVLLYKLESYNMRMKSSLAKKVTTLKNQLQKLNARPFFAQPYDRVNQQRQTLDNLTKSMVRENQTIIKDKKSQFGMLAGKLDALSPLKILERGYSLVKNPQGYVVNNVKQINIGDKLEILMNDGLAECDVISVREGKIYE</sequence>
<feature type="chain" id="PRO_1000200666" description="Exodeoxyribonuclease 7 large subunit">
    <location>
        <begin position="1"/>
        <end position="404"/>
    </location>
</feature>
<reference key="1">
    <citation type="submission" date="2009-01" db="EMBL/GenBank/DDBJ databases">
        <title>Complete sequence of Clostridium cellulolyticum H10.</title>
        <authorList>
            <consortium name="US DOE Joint Genome Institute"/>
            <person name="Lucas S."/>
            <person name="Copeland A."/>
            <person name="Lapidus A."/>
            <person name="Glavina del Rio T."/>
            <person name="Dalin E."/>
            <person name="Tice H."/>
            <person name="Bruce D."/>
            <person name="Goodwin L."/>
            <person name="Pitluck S."/>
            <person name="Chertkov O."/>
            <person name="Saunders E."/>
            <person name="Brettin T."/>
            <person name="Detter J.C."/>
            <person name="Han C."/>
            <person name="Larimer F."/>
            <person name="Land M."/>
            <person name="Hauser L."/>
            <person name="Kyrpides N."/>
            <person name="Ivanova N."/>
            <person name="Zhou J."/>
            <person name="Richardson P."/>
        </authorList>
    </citation>
    <scope>NUCLEOTIDE SEQUENCE [LARGE SCALE GENOMIC DNA]</scope>
    <source>
        <strain>ATCC 35319 / DSM 5812 / JCM 6584 / H10</strain>
    </source>
</reference>
<gene>
    <name evidence="1" type="primary">xseA</name>
    <name type="ordered locus">Ccel_1904</name>
</gene>
<keyword id="KW-0963">Cytoplasm</keyword>
<keyword id="KW-0269">Exonuclease</keyword>
<keyword id="KW-0378">Hydrolase</keyword>
<keyword id="KW-0540">Nuclease</keyword>
<keyword id="KW-1185">Reference proteome</keyword>
<protein>
    <recommendedName>
        <fullName evidence="1">Exodeoxyribonuclease 7 large subunit</fullName>
        <ecNumber evidence="1">3.1.11.6</ecNumber>
    </recommendedName>
    <alternativeName>
        <fullName evidence="1">Exodeoxyribonuclease VII large subunit</fullName>
        <shortName evidence="1">Exonuclease VII large subunit</shortName>
    </alternativeName>
</protein>
<comment type="function">
    <text evidence="1">Bidirectionally degrades single-stranded DNA into large acid-insoluble oligonucleotides, which are then degraded further into small acid-soluble oligonucleotides.</text>
</comment>
<comment type="catalytic activity">
    <reaction evidence="1">
        <text>Exonucleolytic cleavage in either 5'- to 3'- or 3'- to 5'-direction to yield nucleoside 5'-phosphates.</text>
        <dbReference type="EC" id="3.1.11.6"/>
    </reaction>
</comment>
<comment type="subunit">
    <text evidence="1">Heterooligomer composed of large and small subunits.</text>
</comment>
<comment type="subcellular location">
    <subcellularLocation>
        <location evidence="1">Cytoplasm</location>
    </subcellularLocation>
</comment>
<comment type="similarity">
    <text evidence="1">Belongs to the XseA family.</text>
</comment>
<dbReference type="EC" id="3.1.11.6" evidence="1"/>
<dbReference type="EMBL" id="CP001348">
    <property type="protein sequence ID" value="ACL76252.1"/>
    <property type="molecule type" value="Genomic_DNA"/>
</dbReference>
<dbReference type="RefSeq" id="WP_015925357.1">
    <property type="nucleotide sequence ID" value="NC_011898.1"/>
</dbReference>
<dbReference type="SMR" id="B8I3A9"/>
<dbReference type="STRING" id="394503.Ccel_1904"/>
<dbReference type="KEGG" id="cce:Ccel_1904"/>
<dbReference type="eggNOG" id="COG1570">
    <property type="taxonomic scope" value="Bacteria"/>
</dbReference>
<dbReference type="HOGENOM" id="CLU_023625_3_1_9"/>
<dbReference type="OrthoDB" id="9802795at2"/>
<dbReference type="Proteomes" id="UP000001349">
    <property type="component" value="Chromosome"/>
</dbReference>
<dbReference type="GO" id="GO:0005737">
    <property type="term" value="C:cytoplasm"/>
    <property type="evidence" value="ECO:0007669"/>
    <property type="project" value="UniProtKB-SubCell"/>
</dbReference>
<dbReference type="GO" id="GO:0009318">
    <property type="term" value="C:exodeoxyribonuclease VII complex"/>
    <property type="evidence" value="ECO:0007669"/>
    <property type="project" value="InterPro"/>
</dbReference>
<dbReference type="GO" id="GO:0008855">
    <property type="term" value="F:exodeoxyribonuclease VII activity"/>
    <property type="evidence" value="ECO:0007669"/>
    <property type="project" value="UniProtKB-UniRule"/>
</dbReference>
<dbReference type="GO" id="GO:0003676">
    <property type="term" value="F:nucleic acid binding"/>
    <property type="evidence" value="ECO:0007669"/>
    <property type="project" value="InterPro"/>
</dbReference>
<dbReference type="GO" id="GO:0006308">
    <property type="term" value="P:DNA catabolic process"/>
    <property type="evidence" value="ECO:0007669"/>
    <property type="project" value="UniProtKB-UniRule"/>
</dbReference>
<dbReference type="CDD" id="cd04489">
    <property type="entry name" value="ExoVII_LU_OBF"/>
    <property type="match status" value="1"/>
</dbReference>
<dbReference type="HAMAP" id="MF_00378">
    <property type="entry name" value="Exonuc_7_L"/>
    <property type="match status" value="1"/>
</dbReference>
<dbReference type="InterPro" id="IPR003753">
    <property type="entry name" value="Exonuc_VII_L"/>
</dbReference>
<dbReference type="InterPro" id="IPR020579">
    <property type="entry name" value="Exonuc_VII_lsu_C"/>
</dbReference>
<dbReference type="InterPro" id="IPR025824">
    <property type="entry name" value="OB-fold_nuc-bd_dom"/>
</dbReference>
<dbReference type="InterPro" id="IPR016102">
    <property type="entry name" value="Succinyl-CoA_synth-like"/>
</dbReference>
<dbReference type="NCBIfam" id="TIGR00237">
    <property type="entry name" value="xseA"/>
    <property type="match status" value="1"/>
</dbReference>
<dbReference type="PANTHER" id="PTHR30008">
    <property type="entry name" value="EXODEOXYRIBONUCLEASE 7 LARGE SUBUNIT"/>
    <property type="match status" value="1"/>
</dbReference>
<dbReference type="PANTHER" id="PTHR30008:SF0">
    <property type="entry name" value="EXODEOXYRIBONUCLEASE 7 LARGE SUBUNIT"/>
    <property type="match status" value="1"/>
</dbReference>
<dbReference type="Pfam" id="PF02601">
    <property type="entry name" value="Exonuc_VII_L"/>
    <property type="match status" value="2"/>
</dbReference>
<dbReference type="Pfam" id="PF13742">
    <property type="entry name" value="tRNA_anti_2"/>
    <property type="match status" value="1"/>
</dbReference>
<dbReference type="SUPFAM" id="SSF52210">
    <property type="entry name" value="Succinyl-CoA synthetase domains"/>
    <property type="match status" value="1"/>
</dbReference>
<evidence type="ECO:0000255" key="1">
    <source>
        <dbReference type="HAMAP-Rule" id="MF_00378"/>
    </source>
</evidence>
<organism>
    <name type="scientific">Ruminiclostridium cellulolyticum (strain ATCC 35319 / DSM 5812 / JCM 6584 / H10)</name>
    <name type="common">Clostridium cellulolyticum</name>
    <dbReference type="NCBI Taxonomy" id="394503"/>
    <lineage>
        <taxon>Bacteria</taxon>
        <taxon>Bacillati</taxon>
        <taxon>Bacillota</taxon>
        <taxon>Clostridia</taxon>
        <taxon>Eubacteriales</taxon>
        <taxon>Oscillospiraceae</taxon>
        <taxon>Ruminiclostridium</taxon>
    </lineage>
</organism>
<proteinExistence type="inferred from homology"/>
<name>EX7L_RUMCH</name>